<proteinExistence type="evidence at transcript level"/>
<feature type="chain" id="PRO_0000158645" description="Membrane-spanning 4-domains subfamily A member 8">
    <location>
        <begin position="1"/>
        <end position="250"/>
    </location>
</feature>
<feature type="topological domain" description="Cytoplasmic" evidence="1">
    <location>
        <begin position="1"/>
        <end position="74"/>
    </location>
</feature>
<feature type="transmembrane region" description="Helical" evidence="1">
    <location>
        <begin position="75"/>
        <end position="95"/>
    </location>
</feature>
<feature type="topological domain" description="Extracellular" evidence="1">
    <location>
        <begin position="96"/>
        <end position="98"/>
    </location>
</feature>
<feature type="transmembrane region" description="Helical" evidence="1">
    <location>
        <begin position="99"/>
        <end position="119"/>
    </location>
</feature>
<feature type="topological domain" description="Cytoplasmic" evidence="1">
    <location>
        <begin position="120"/>
        <end position="136"/>
    </location>
</feature>
<feature type="transmembrane region" description="Helical" evidence="1">
    <location>
        <begin position="137"/>
        <end position="157"/>
    </location>
</feature>
<feature type="topological domain" description="Extracellular" evidence="1">
    <location>
        <begin position="158"/>
        <end position="180"/>
    </location>
</feature>
<feature type="transmembrane region" description="Helical" evidence="1">
    <location>
        <begin position="181"/>
        <end position="201"/>
    </location>
</feature>
<feature type="topological domain" description="Cytoplasmic" evidence="1">
    <location>
        <begin position="202"/>
        <end position="250"/>
    </location>
</feature>
<feature type="sequence variant" id="VAR_053523" description="In dbSNP:rs35956659.">
    <original>V</original>
    <variation>L</variation>
    <location>
        <position position="95"/>
    </location>
</feature>
<feature type="sequence conflict" description="In Ref. 3; AAH22895." evidence="2" ref="3">
    <original>H</original>
    <variation>R</variation>
    <location>
        <position position="83"/>
    </location>
</feature>
<protein>
    <recommendedName>
        <fullName>Membrane-spanning 4-domains subfamily A member 8</fullName>
    </recommendedName>
    <alternativeName>
        <fullName>Four-span transmembrane protein 4</fullName>
    </alternativeName>
    <alternativeName>
        <fullName>Membrane-spanning 4-domains subfamily A member 8B</fullName>
    </alternativeName>
</protein>
<keyword id="KW-0472">Membrane</keyword>
<keyword id="KW-0675">Receptor</keyword>
<keyword id="KW-1185">Reference proteome</keyword>
<keyword id="KW-0812">Transmembrane</keyword>
<keyword id="KW-1133">Transmembrane helix</keyword>
<comment type="function">
    <text>May be involved in signal transduction as a component of a multimeric receptor complex.</text>
</comment>
<comment type="subcellular location">
    <subcellularLocation>
        <location>Membrane</location>
        <topology>Multi-pass membrane protein</topology>
    </subcellularLocation>
</comment>
<comment type="tissue specificity">
    <text>Expressed by hematopoietic tissues and cells lines.</text>
</comment>
<comment type="similarity">
    <text evidence="2">Belongs to the MS4A family.</text>
</comment>
<sequence length="250" mass="26290">MNSMTSAVPVANSVLVVAPHNGYPVTPGIMSHVPLYPNSQPQVHLVPGNPPSLVSNVNGQPVQKALKEGKTLGAIQIIIGLAHIGLGSIMATVLVGEYLSISFYGGFPFWGGLWFIISGSLSVAAENQPYSYCLLSGSLGLNIVSAICSAVGVILFITDLSIPHPYAYPDYYPYAWGVNPGMAISGVLLVFCLLEFGIACASSHFGCQLVCCQSSNVSVIYPNIYAANPVITPEPVTSPPSYSSEIQANK</sequence>
<evidence type="ECO:0000255" key="1"/>
<evidence type="ECO:0000305" key="2"/>
<gene>
    <name type="primary">MS4A8</name>
    <name type="synonym">4SPAN4</name>
    <name type="synonym">MS4A8B</name>
</gene>
<accession>Q9BY19</accession>
<accession>Q8TCA5</accession>
<reference key="1">
    <citation type="journal article" date="2001" name="Genomics">
        <title>Identification of a CD20-, Fc-epsilon-RI-beta-, and HTm4-related gene family: sixteen new MS4A family members expressed in human and mouse.</title>
        <authorList>
            <person name="Liang Y."/>
            <person name="Tedder T.F."/>
        </authorList>
    </citation>
    <scope>NUCLEOTIDE SEQUENCE [MRNA]</scope>
    <source>
        <tissue>Brain</tissue>
    </source>
</reference>
<reference key="2">
    <citation type="submission" date="2001-02" db="EMBL/GenBank/DDBJ databases">
        <title>Isolation of a family of hematopoietic-expressed four-transmembrane genes related to CD20 and Fc-epsilon-RI-beta.</title>
        <authorList>
            <person name="Hulett M.D."/>
            <person name="Pagler E."/>
            <person name="Hogarth P.M."/>
            <person name="Eyre H.J."/>
            <person name="Baker E."/>
            <person name="Crawford J."/>
            <person name="Sutherland G.R."/>
            <person name="Parish C.R."/>
        </authorList>
    </citation>
    <scope>NUCLEOTIDE SEQUENCE [MRNA]</scope>
    <source>
        <tissue>Placenta</tissue>
    </source>
</reference>
<reference key="3">
    <citation type="journal article" date="2004" name="Genome Res.">
        <title>The status, quality, and expansion of the NIH full-length cDNA project: the Mammalian Gene Collection (MGC).</title>
        <authorList>
            <consortium name="The MGC Project Team"/>
        </authorList>
    </citation>
    <scope>NUCLEOTIDE SEQUENCE [LARGE SCALE MRNA]</scope>
    <source>
        <tissue>Lung</tissue>
    </source>
</reference>
<dbReference type="EMBL" id="AF237905">
    <property type="protein sequence ID" value="AAK37414.1"/>
    <property type="molecule type" value="mRNA"/>
</dbReference>
<dbReference type="EMBL" id="AF350504">
    <property type="protein sequence ID" value="AAL56224.1"/>
    <property type="molecule type" value="mRNA"/>
</dbReference>
<dbReference type="EMBL" id="BC022895">
    <property type="protein sequence ID" value="AAH22895.1"/>
    <property type="molecule type" value="mRNA"/>
</dbReference>
<dbReference type="CCDS" id="CCDS7990.1"/>
<dbReference type="RefSeq" id="NP_113645.1">
    <property type="nucleotide sequence ID" value="NM_031457.2"/>
</dbReference>
<dbReference type="SMR" id="Q9BY19"/>
<dbReference type="FunCoup" id="Q9BY19">
    <property type="interactions" value="307"/>
</dbReference>
<dbReference type="STRING" id="9606.ENSP00000300226"/>
<dbReference type="GlyGen" id="Q9BY19">
    <property type="glycosylation" value="3 sites, 1 O-linked glycan (3 sites)"/>
</dbReference>
<dbReference type="iPTMnet" id="Q9BY19"/>
<dbReference type="PhosphoSitePlus" id="Q9BY19"/>
<dbReference type="BioMuta" id="MS4A8"/>
<dbReference type="DMDM" id="29611827"/>
<dbReference type="PaxDb" id="9606-ENSP00000300226"/>
<dbReference type="PeptideAtlas" id="Q9BY19"/>
<dbReference type="Antibodypedia" id="1542">
    <property type="antibodies" value="137 antibodies from 18 providers"/>
</dbReference>
<dbReference type="DNASU" id="83661"/>
<dbReference type="Ensembl" id="ENST00000300226.7">
    <property type="protein sequence ID" value="ENSP00000300226.2"/>
    <property type="gene ID" value="ENSG00000166959.8"/>
</dbReference>
<dbReference type="GeneID" id="83661"/>
<dbReference type="KEGG" id="hsa:83661"/>
<dbReference type="MANE-Select" id="ENST00000300226.7">
    <property type="protein sequence ID" value="ENSP00000300226.2"/>
    <property type="RefSeq nucleotide sequence ID" value="NM_031457.2"/>
    <property type="RefSeq protein sequence ID" value="NP_113645.1"/>
</dbReference>
<dbReference type="UCSC" id="uc001npv.4">
    <property type="organism name" value="human"/>
</dbReference>
<dbReference type="AGR" id="HGNC:13380"/>
<dbReference type="CTD" id="83661"/>
<dbReference type="DisGeNET" id="83661"/>
<dbReference type="GeneCards" id="MS4A8"/>
<dbReference type="HGNC" id="HGNC:13380">
    <property type="gene designation" value="MS4A8"/>
</dbReference>
<dbReference type="HPA" id="ENSG00000166959">
    <property type="expression patterns" value="Tissue enhanced (fallopian tube, intestine)"/>
</dbReference>
<dbReference type="MIM" id="606549">
    <property type="type" value="gene"/>
</dbReference>
<dbReference type="neXtProt" id="NX_Q9BY19"/>
<dbReference type="OpenTargets" id="ENSG00000166959"/>
<dbReference type="PharmGKB" id="PA31126"/>
<dbReference type="VEuPathDB" id="HostDB:ENSG00000166959"/>
<dbReference type="eggNOG" id="ENOG502SR7E">
    <property type="taxonomic scope" value="Eukaryota"/>
</dbReference>
<dbReference type="GeneTree" id="ENSGT00940000162329"/>
<dbReference type="InParanoid" id="Q9BY19"/>
<dbReference type="OMA" id="QLVCCQH"/>
<dbReference type="OrthoDB" id="10071849at2759"/>
<dbReference type="PAN-GO" id="Q9BY19">
    <property type="GO annotations" value="2 GO annotations based on evolutionary models"/>
</dbReference>
<dbReference type="PhylomeDB" id="Q9BY19"/>
<dbReference type="TreeFam" id="TF335157"/>
<dbReference type="PathwayCommons" id="Q9BY19"/>
<dbReference type="BioGRID-ORCS" id="83661">
    <property type="hits" value="15 hits in 1133 CRISPR screens"/>
</dbReference>
<dbReference type="ChiTaRS" id="MS4A8">
    <property type="organism name" value="human"/>
</dbReference>
<dbReference type="GenomeRNAi" id="83661"/>
<dbReference type="Pharos" id="Q9BY19">
    <property type="development level" value="Tdark"/>
</dbReference>
<dbReference type="PRO" id="PR:Q9BY19"/>
<dbReference type="Proteomes" id="UP000005640">
    <property type="component" value="Chromosome 11"/>
</dbReference>
<dbReference type="RNAct" id="Q9BY19">
    <property type="molecule type" value="protein"/>
</dbReference>
<dbReference type="Bgee" id="ENSG00000166959">
    <property type="expression patterns" value="Expressed in right uterine tube and 110 other cell types or tissues"/>
</dbReference>
<dbReference type="ExpressionAtlas" id="Q9BY19">
    <property type="expression patterns" value="baseline and differential"/>
</dbReference>
<dbReference type="GO" id="GO:0005886">
    <property type="term" value="C:plasma membrane"/>
    <property type="evidence" value="ECO:0000314"/>
    <property type="project" value="ARUK-UCL"/>
</dbReference>
<dbReference type="GO" id="GO:0007166">
    <property type="term" value="P:cell surface receptor signaling pathway"/>
    <property type="evidence" value="ECO:0000318"/>
    <property type="project" value="GO_Central"/>
</dbReference>
<dbReference type="InterPro" id="IPR007237">
    <property type="entry name" value="CD20-like"/>
</dbReference>
<dbReference type="InterPro" id="IPR030417">
    <property type="entry name" value="MS4A"/>
</dbReference>
<dbReference type="PANTHER" id="PTHR23320:SF155">
    <property type="entry name" value="MEMBRANE-SPANNING 4-DOMAINS SUBFAMILY A MEMBER 8"/>
    <property type="match status" value="1"/>
</dbReference>
<dbReference type="PANTHER" id="PTHR23320">
    <property type="entry name" value="MEMBRANE-SPANNING 4-DOMAINS SUBFAMILY A MS4A -RELATED"/>
    <property type="match status" value="1"/>
</dbReference>
<dbReference type="Pfam" id="PF04103">
    <property type="entry name" value="CD20"/>
    <property type="match status" value="1"/>
</dbReference>
<name>M4A8_HUMAN</name>
<organism>
    <name type="scientific">Homo sapiens</name>
    <name type="common">Human</name>
    <dbReference type="NCBI Taxonomy" id="9606"/>
    <lineage>
        <taxon>Eukaryota</taxon>
        <taxon>Metazoa</taxon>
        <taxon>Chordata</taxon>
        <taxon>Craniata</taxon>
        <taxon>Vertebrata</taxon>
        <taxon>Euteleostomi</taxon>
        <taxon>Mammalia</taxon>
        <taxon>Eutheria</taxon>
        <taxon>Euarchontoglires</taxon>
        <taxon>Primates</taxon>
        <taxon>Haplorrhini</taxon>
        <taxon>Catarrhini</taxon>
        <taxon>Hominidae</taxon>
        <taxon>Homo</taxon>
    </lineage>
</organism>